<accession>Q39134</accession>
<accession>Q8LE75</accession>
<keyword id="KW-0029">Amino-acid transport</keyword>
<keyword id="KW-1003">Cell membrane</keyword>
<keyword id="KW-0472">Membrane</keyword>
<keyword id="KW-0539">Nucleus</keyword>
<keyword id="KW-1185">Reference proteome</keyword>
<keyword id="KW-0769">Symport</keyword>
<keyword id="KW-0812">Transmembrane</keyword>
<keyword id="KW-1133">Transmembrane helix</keyword>
<keyword id="KW-0813">Transport</keyword>
<comment type="function">
    <text evidence="5">Amino acid-proton symporter. Stereospecific transporter with a broad specificity for GABA, tryptophan and both neutral and basic amino acids. High affinity transport of cationic amino acids.</text>
</comment>
<comment type="activity regulation">
    <text evidence="5">Inhibited by carbonylcyanide m-chlorophenylhydrazone and 2,4-dinitrophenol.</text>
</comment>
<comment type="biophysicochemical properties">
    <kinetics>
        <KM evidence="2">12.9 mM for GABA</KM>
    </kinetics>
</comment>
<comment type="subcellular location">
    <subcellularLocation>
        <location evidence="3">Cell membrane</location>
    </subcellularLocation>
    <subcellularLocation>
        <location evidence="3">Nucleus membrane</location>
    </subcellularLocation>
    <subcellularLocation>
        <location evidence="3">Endomembrane system</location>
    </subcellularLocation>
    <text>Not found in vacuole membrane.</text>
</comment>
<comment type="tissue specificity">
    <text evidence="3 5">Expressed in the root phloem. Detected in stamens, in cotyledons, and in major veins of mature leaves.</text>
</comment>
<comment type="developmental stage">
    <text>Induced in the connective tissue of stamens shortly before dehiscence.</text>
</comment>
<comment type="disruption phenotype">
    <text evidence="3 4">No visible phenotype.</text>
</comment>
<comment type="similarity">
    <text evidence="6">Belongs to the amino acid/polyamine transporter 2 family. Amino acid/auxin permease (AAAP) (TC 2.A.18.2) subfamily.</text>
</comment>
<organism>
    <name type="scientific">Arabidopsis thaliana</name>
    <name type="common">Mouse-ear cress</name>
    <dbReference type="NCBI Taxonomy" id="3702"/>
    <lineage>
        <taxon>Eukaryota</taxon>
        <taxon>Viridiplantae</taxon>
        <taxon>Streptophyta</taxon>
        <taxon>Embryophyta</taxon>
        <taxon>Tracheophyta</taxon>
        <taxon>Spermatophyta</taxon>
        <taxon>Magnoliopsida</taxon>
        <taxon>eudicotyledons</taxon>
        <taxon>Gunneridae</taxon>
        <taxon>Pentapetalae</taxon>
        <taxon>rosids</taxon>
        <taxon>malvids</taxon>
        <taxon>Brassicales</taxon>
        <taxon>Brassicaceae</taxon>
        <taxon>Camelineae</taxon>
        <taxon>Arabidopsis</taxon>
    </lineage>
</organism>
<gene>
    <name type="primary">AAP3</name>
    <name type="ordered locus">At1g77380</name>
    <name type="ORF">F2P24.9</name>
</gene>
<evidence type="ECO:0000255" key="1"/>
<evidence type="ECO:0000269" key="2">
    <source>
    </source>
</evidence>
<evidence type="ECO:0000269" key="3">
    <source>
    </source>
</evidence>
<evidence type="ECO:0000269" key="4">
    <source>
    </source>
</evidence>
<evidence type="ECO:0000269" key="5">
    <source>
    </source>
</evidence>
<evidence type="ECO:0000305" key="6"/>
<sequence>MVQNHQTVLAVDMPQTGGSKYLDDDGKNKRTGSVWTASAHIITAVIGSGVLSLAWATAQLGWLAGPVVMLLFSAVTYFTSSLLAACYRSGDPISGKRNYTYMDAVRSNLGGVKVTLCGIVQYLNIFGVAIGYTIASAISMMAIKRSNCFHKSGGKDPCHMNSNPYMIAFGLVQILFSQIPDFDQLWWLSILAAVMSFTYSSAGLALGIAQVVVNGKVKGSLTGISIGAVTETQKIWRTFQALGDIAFAYSYSIILIEIQDTVKSPPSEEKTMKKATLVSVSVTTMFYMLCGCMGYAAFGDLSPGNLLTGFGFYNPYWLLDIANAAIVIHLIGAYQVYCQPLFAFIEKQASIQFPDSEFIAKDIKIPIPGFKPLRLNVFRLIWRTVFVIITTVISMLLPFFNDVVGLLGALGFWPLTVYFPVEMYIAQKKIPRWSTRWVCLQVFSLGCLVVSIAAAAGSIAGVLLDLKSYKPFRSEY</sequence>
<dbReference type="EMBL" id="X77499">
    <property type="protein sequence ID" value="CAA54630.1"/>
    <property type="molecule type" value="mRNA"/>
</dbReference>
<dbReference type="EMBL" id="AC078898">
    <property type="protein sequence ID" value="AAG29203.1"/>
    <property type="molecule type" value="Genomic_DNA"/>
</dbReference>
<dbReference type="EMBL" id="CP002684">
    <property type="protein sequence ID" value="AEE35971.1"/>
    <property type="molecule type" value="Genomic_DNA"/>
</dbReference>
<dbReference type="EMBL" id="AY099788">
    <property type="protein sequence ID" value="AAM20639.1"/>
    <property type="molecule type" value="mRNA"/>
</dbReference>
<dbReference type="EMBL" id="AY128905">
    <property type="protein sequence ID" value="AAM91305.1"/>
    <property type="molecule type" value="mRNA"/>
</dbReference>
<dbReference type="EMBL" id="AY085581">
    <property type="protein sequence ID" value="AAM62803.1"/>
    <property type="molecule type" value="mRNA"/>
</dbReference>
<dbReference type="PIR" id="H96802">
    <property type="entry name" value="H96802"/>
</dbReference>
<dbReference type="RefSeq" id="NP_177862.1">
    <property type="nucleotide sequence ID" value="NM_106387.3"/>
</dbReference>
<dbReference type="BioGRID" id="29293">
    <property type="interactions" value="32"/>
</dbReference>
<dbReference type="FunCoup" id="Q39134">
    <property type="interactions" value="2"/>
</dbReference>
<dbReference type="IntAct" id="Q39134">
    <property type="interactions" value="32"/>
</dbReference>
<dbReference type="STRING" id="3702.Q39134"/>
<dbReference type="TCDB" id="2.A.18.2.3">
    <property type="family name" value="the amino acid/auxin permease (aaap) family"/>
</dbReference>
<dbReference type="PaxDb" id="3702-AT1G77380.1"/>
<dbReference type="ProteomicsDB" id="244544"/>
<dbReference type="EnsemblPlants" id="AT1G77380.1">
    <property type="protein sequence ID" value="AT1G77380.1"/>
    <property type="gene ID" value="AT1G77380"/>
</dbReference>
<dbReference type="GeneID" id="844074"/>
<dbReference type="Gramene" id="AT1G77380.1">
    <property type="protein sequence ID" value="AT1G77380.1"/>
    <property type="gene ID" value="AT1G77380"/>
</dbReference>
<dbReference type="KEGG" id="ath:AT1G77380"/>
<dbReference type="Araport" id="AT1G77380"/>
<dbReference type="TAIR" id="AT1G77380">
    <property type="gene designation" value="AAP3"/>
</dbReference>
<dbReference type="eggNOG" id="KOG1303">
    <property type="taxonomic scope" value="Eukaryota"/>
</dbReference>
<dbReference type="HOGENOM" id="CLU_031247_4_1_1"/>
<dbReference type="InParanoid" id="Q39134"/>
<dbReference type="OMA" id="DAGRLMF"/>
<dbReference type="PhylomeDB" id="Q39134"/>
<dbReference type="PRO" id="PR:Q39134"/>
<dbReference type="Proteomes" id="UP000006548">
    <property type="component" value="Chromosome 1"/>
</dbReference>
<dbReference type="ExpressionAtlas" id="Q39134">
    <property type="expression patterns" value="baseline and differential"/>
</dbReference>
<dbReference type="GO" id="GO:0031965">
    <property type="term" value="C:nuclear membrane"/>
    <property type="evidence" value="ECO:0007669"/>
    <property type="project" value="UniProtKB-SubCell"/>
</dbReference>
<dbReference type="GO" id="GO:0005886">
    <property type="term" value="C:plasma membrane"/>
    <property type="evidence" value="ECO:0007669"/>
    <property type="project" value="UniProtKB-SubCell"/>
</dbReference>
<dbReference type="GO" id="GO:0015171">
    <property type="term" value="F:amino acid transmembrane transporter activity"/>
    <property type="evidence" value="ECO:0000250"/>
    <property type="project" value="TAIR"/>
</dbReference>
<dbReference type="GO" id="GO:0015293">
    <property type="term" value="F:symporter activity"/>
    <property type="evidence" value="ECO:0007669"/>
    <property type="project" value="UniProtKB-KW"/>
</dbReference>
<dbReference type="GO" id="GO:0015802">
    <property type="term" value="P:basic amino acid transport"/>
    <property type="evidence" value="ECO:0000314"/>
    <property type="project" value="TAIR"/>
</dbReference>
<dbReference type="GO" id="GO:0006952">
    <property type="term" value="P:defense response"/>
    <property type="evidence" value="ECO:0000270"/>
    <property type="project" value="TAIR"/>
</dbReference>
<dbReference type="FunFam" id="1.20.1740.10:FF:000055">
    <property type="entry name" value="Amino acid permease 6"/>
    <property type="match status" value="1"/>
</dbReference>
<dbReference type="InterPro" id="IPR013057">
    <property type="entry name" value="AA_transpt_TM"/>
</dbReference>
<dbReference type="PANTHER" id="PTHR48017">
    <property type="entry name" value="OS05G0424000 PROTEIN-RELATED"/>
    <property type="match status" value="1"/>
</dbReference>
<dbReference type="Pfam" id="PF01490">
    <property type="entry name" value="Aa_trans"/>
    <property type="match status" value="1"/>
</dbReference>
<proteinExistence type="evidence at protein level"/>
<reference key="1">
    <citation type="journal article" date="1995" name="J. Biol. Chem.">
        <title>Substrate specificity and expression profile of amino acid transporters (AAPs) in Arabidopsis.</title>
        <authorList>
            <person name="Fischer W.-N."/>
            <person name="Kwart M."/>
            <person name="Hummel S."/>
            <person name="Frommer W.B."/>
        </authorList>
    </citation>
    <scope>NUCLEOTIDE SEQUENCE [MRNA]</scope>
    <scope>FUNCTION</scope>
    <scope>ACTIVITY REGULATION</scope>
    <scope>TISSUE SPECIFICITY</scope>
    <source>
        <strain>cv. Landsberg erecta</strain>
    </source>
</reference>
<reference key="2">
    <citation type="journal article" date="2000" name="Nature">
        <title>Sequence and analysis of chromosome 1 of the plant Arabidopsis thaliana.</title>
        <authorList>
            <person name="Theologis A."/>
            <person name="Ecker J.R."/>
            <person name="Palm C.J."/>
            <person name="Federspiel N.A."/>
            <person name="Kaul S."/>
            <person name="White O."/>
            <person name="Alonso J."/>
            <person name="Altafi H."/>
            <person name="Araujo R."/>
            <person name="Bowman C.L."/>
            <person name="Brooks S.Y."/>
            <person name="Buehler E."/>
            <person name="Chan A."/>
            <person name="Chao Q."/>
            <person name="Chen H."/>
            <person name="Cheuk R.F."/>
            <person name="Chin C.W."/>
            <person name="Chung M.K."/>
            <person name="Conn L."/>
            <person name="Conway A.B."/>
            <person name="Conway A.R."/>
            <person name="Creasy T.H."/>
            <person name="Dewar K."/>
            <person name="Dunn P."/>
            <person name="Etgu P."/>
            <person name="Feldblyum T.V."/>
            <person name="Feng J.-D."/>
            <person name="Fong B."/>
            <person name="Fujii C.Y."/>
            <person name="Gill J.E."/>
            <person name="Goldsmith A.D."/>
            <person name="Haas B."/>
            <person name="Hansen N.F."/>
            <person name="Hughes B."/>
            <person name="Huizar L."/>
            <person name="Hunter J.L."/>
            <person name="Jenkins J."/>
            <person name="Johnson-Hopson C."/>
            <person name="Khan S."/>
            <person name="Khaykin E."/>
            <person name="Kim C.J."/>
            <person name="Koo H.L."/>
            <person name="Kremenetskaia I."/>
            <person name="Kurtz D.B."/>
            <person name="Kwan A."/>
            <person name="Lam B."/>
            <person name="Langin-Hooper S."/>
            <person name="Lee A."/>
            <person name="Lee J.M."/>
            <person name="Lenz C.A."/>
            <person name="Li J.H."/>
            <person name="Li Y.-P."/>
            <person name="Lin X."/>
            <person name="Liu S.X."/>
            <person name="Liu Z.A."/>
            <person name="Luros J.S."/>
            <person name="Maiti R."/>
            <person name="Marziali A."/>
            <person name="Militscher J."/>
            <person name="Miranda M."/>
            <person name="Nguyen M."/>
            <person name="Nierman W.C."/>
            <person name="Osborne B.I."/>
            <person name="Pai G."/>
            <person name="Peterson J."/>
            <person name="Pham P.K."/>
            <person name="Rizzo M."/>
            <person name="Rooney T."/>
            <person name="Rowley D."/>
            <person name="Sakano H."/>
            <person name="Salzberg S.L."/>
            <person name="Schwartz J.R."/>
            <person name="Shinn P."/>
            <person name="Southwick A.M."/>
            <person name="Sun H."/>
            <person name="Tallon L.J."/>
            <person name="Tambunga G."/>
            <person name="Toriumi M.J."/>
            <person name="Town C.D."/>
            <person name="Utterback T."/>
            <person name="Van Aken S."/>
            <person name="Vaysberg M."/>
            <person name="Vysotskaia V.S."/>
            <person name="Walker M."/>
            <person name="Wu D."/>
            <person name="Yu G."/>
            <person name="Fraser C.M."/>
            <person name="Venter J.C."/>
            <person name="Davis R.W."/>
        </authorList>
    </citation>
    <scope>NUCLEOTIDE SEQUENCE [LARGE SCALE GENOMIC DNA]</scope>
    <source>
        <strain>cv. Columbia</strain>
    </source>
</reference>
<reference key="3">
    <citation type="journal article" date="2017" name="Plant J.">
        <title>Araport11: a complete reannotation of the Arabidopsis thaliana reference genome.</title>
        <authorList>
            <person name="Cheng C.Y."/>
            <person name="Krishnakumar V."/>
            <person name="Chan A.P."/>
            <person name="Thibaud-Nissen F."/>
            <person name="Schobel S."/>
            <person name="Town C.D."/>
        </authorList>
    </citation>
    <scope>GENOME REANNOTATION</scope>
    <source>
        <strain>cv. Columbia</strain>
    </source>
</reference>
<reference key="4">
    <citation type="journal article" date="2003" name="Science">
        <title>Empirical analysis of transcriptional activity in the Arabidopsis genome.</title>
        <authorList>
            <person name="Yamada K."/>
            <person name="Lim J."/>
            <person name="Dale J.M."/>
            <person name="Chen H."/>
            <person name="Shinn P."/>
            <person name="Palm C.J."/>
            <person name="Southwick A.M."/>
            <person name="Wu H.C."/>
            <person name="Kim C.J."/>
            <person name="Nguyen M."/>
            <person name="Pham P.K."/>
            <person name="Cheuk R.F."/>
            <person name="Karlin-Newmann G."/>
            <person name="Liu S.X."/>
            <person name="Lam B."/>
            <person name="Sakano H."/>
            <person name="Wu T."/>
            <person name="Yu G."/>
            <person name="Miranda M."/>
            <person name="Quach H.L."/>
            <person name="Tripp M."/>
            <person name="Chang C.H."/>
            <person name="Lee J.M."/>
            <person name="Toriumi M.J."/>
            <person name="Chan M.M."/>
            <person name="Tang C.C."/>
            <person name="Onodera C.S."/>
            <person name="Deng J.M."/>
            <person name="Akiyama K."/>
            <person name="Ansari Y."/>
            <person name="Arakawa T."/>
            <person name="Banh J."/>
            <person name="Banno F."/>
            <person name="Bowser L."/>
            <person name="Brooks S.Y."/>
            <person name="Carninci P."/>
            <person name="Chao Q."/>
            <person name="Choy N."/>
            <person name="Enju A."/>
            <person name="Goldsmith A.D."/>
            <person name="Gurjal M."/>
            <person name="Hansen N.F."/>
            <person name="Hayashizaki Y."/>
            <person name="Johnson-Hopson C."/>
            <person name="Hsuan V.W."/>
            <person name="Iida K."/>
            <person name="Karnes M."/>
            <person name="Khan S."/>
            <person name="Koesema E."/>
            <person name="Ishida J."/>
            <person name="Jiang P.X."/>
            <person name="Jones T."/>
            <person name="Kawai J."/>
            <person name="Kamiya A."/>
            <person name="Meyers C."/>
            <person name="Nakajima M."/>
            <person name="Narusaka M."/>
            <person name="Seki M."/>
            <person name="Sakurai T."/>
            <person name="Satou M."/>
            <person name="Tamse R."/>
            <person name="Vaysberg M."/>
            <person name="Wallender E.K."/>
            <person name="Wong C."/>
            <person name="Yamamura Y."/>
            <person name="Yuan S."/>
            <person name="Shinozaki K."/>
            <person name="Davis R.W."/>
            <person name="Theologis A."/>
            <person name="Ecker J.R."/>
        </authorList>
    </citation>
    <scope>NUCLEOTIDE SEQUENCE [LARGE SCALE MRNA]</scope>
    <source>
        <strain>cv. Columbia</strain>
    </source>
</reference>
<reference key="5">
    <citation type="submission" date="2002-03" db="EMBL/GenBank/DDBJ databases">
        <title>Full-length cDNA from Arabidopsis thaliana.</title>
        <authorList>
            <person name="Brover V.V."/>
            <person name="Troukhan M.E."/>
            <person name="Alexandrov N.A."/>
            <person name="Lu Y.-P."/>
            <person name="Flavell R.B."/>
            <person name="Feldmann K.A."/>
        </authorList>
    </citation>
    <scope>NUCLEOTIDE SEQUENCE [LARGE SCALE MRNA]</scope>
</reference>
<reference key="6">
    <citation type="journal article" date="1999" name="FEBS Lett.">
        <title>Identification and characterization of GABA, proline and quaternary ammonium compound transporters from Arabidopsis thaliana.</title>
        <authorList>
            <person name="Breitkreuz K.E."/>
            <person name="Shelp B.J."/>
            <person name="Fischer W.-N."/>
            <person name="Schwacke R."/>
            <person name="Rentsch D."/>
        </authorList>
    </citation>
    <scope>BIOPHYSICOCHEMICAL PROPERTIES</scope>
</reference>
<reference key="7">
    <citation type="journal article" date="2002" name="Plant J.">
        <title>Low and high affinity amino acid H+-cotransporters for cellular import of neutral and charged amino acids.</title>
        <authorList>
            <person name="Fischer W.-N."/>
            <person name="Loo D.D.F."/>
            <person name="Koch W."/>
            <person name="Ludewig U."/>
            <person name="Boorer K.J."/>
            <person name="Tegeder M."/>
            <person name="Rentsch D."/>
            <person name="Wright E.M."/>
            <person name="Frommer W.B."/>
        </authorList>
    </citation>
    <scope>CHARACTERIZATION</scope>
</reference>
<reference key="8">
    <citation type="journal article" date="2004" name="J. Exp. Bot.">
        <title>Root phloem-specific expression of the plasma membrane amino acid proton co-transporter AAP3.</title>
        <authorList>
            <person name="Okumoto S."/>
            <person name="Koch W."/>
            <person name="Tegeder M."/>
            <person name="Fischer W.-N."/>
            <person name="Biehl A."/>
            <person name="Leister D."/>
            <person name="Stierhof Y.D."/>
            <person name="Frommer W.B."/>
        </authorList>
    </citation>
    <scope>TISSUE SPECIFICITY</scope>
    <scope>SUBCELLULAR LOCATION</scope>
    <scope>REGULATION</scope>
    <scope>DISRUPTION PHENOTYPE</scope>
</reference>
<reference key="9">
    <citation type="journal article" date="2008" name="New Phytol.">
        <title>Root uptake of cationic amino acids by Arabidopsis depends on functional expression of amino acid permease 5.</title>
        <authorList>
            <person name="Svennerstam H."/>
            <person name="Ganeteg U."/>
            <person name="Naesholm T."/>
        </authorList>
    </citation>
    <scope>DISRUPTION PHENOTYPE</scope>
</reference>
<protein>
    <recommendedName>
        <fullName>Amino acid permease 3</fullName>
    </recommendedName>
    <alternativeName>
        <fullName>Amino acid transporter AAP3</fullName>
    </alternativeName>
</protein>
<feature type="chain" id="PRO_0000387501" description="Amino acid permease 3">
    <location>
        <begin position="1"/>
        <end position="476"/>
    </location>
</feature>
<feature type="topological domain" description="Cytoplasmic" evidence="1">
    <location>
        <begin position="1"/>
        <end position="33"/>
    </location>
</feature>
<feature type="transmembrane region" description="Helical" evidence="1">
    <location>
        <begin position="34"/>
        <end position="54"/>
    </location>
</feature>
<feature type="topological domain" description="Extracellular" evidence="1">
    <location>
        <begin position="55"/>
        <end position="57"/>
    </location>
</feature>
<feature type="transmembrane region" description="Helical" evidence="1">
    <location>
        <begin position="58"/>
        <end position="78"/>
    </location>
</feature>
<feature type="topological domain" description="Cytoplasmic" evidence="1">
    <location>
        <begin position="79"/>
        <end position="122"/>
    </location>
</feature>
<feature type="transmembrane region" description="Helical" evidence="1">
    <location>
        <begin position="123"/>
        <end position="143"/>
    </location>
</feature>
<feature type="topological domain" description="Extracellular" evidence="1">
    <location>
        <begin position="144"/>
        <end position="166"/>
    </location>
</feature>
<feature type="transmembrane region" description="Helical" evidence="1">
    <location>
        <begin position="167"/>
        <end position="187"/>
    </location>
</feature>
<feature type="transmembrane region" description="Helical" evidence="1">
    <location>
        <begin position="188"/>
        <end position="208"/>
    </location>
</feature>
<feature type="topological domain" description="Extracellular" evidence="1">
    <location>
        <begin position="209"/>
        <end position="277"/>
    </location>
</feature>
<feature type="transmembrane region" description="Helical" evidence="1">
    <location>
        <begin position="278"/>
        <end position="298"/>
    </location>
</feature>
<feature type="topological domain" description="Cytoplasmic" evidence="1">
    <location>
        <begin position="299"/>
        <end position="300"/>
    </location>
</feature>
<feature type="transmembrane region" description="Helical" evidence="1">
    <location>
        <begin position="301"/>
        <end position="321"/>
    </location>
</feature>
<feature type="topological domain" description="Extracellular" evidence="1">
    <location>
        <begin position="322"/>
        <end position="324"/>
    </location>
</feature>
<feature type="transmembrane region" description="Helical" evidence="1">
    <location>
        <begin position="325"/>
        <end position="345"/>
    </location>
</feature>
<feature type="topological domain" description="Cytoplasmic" evidence="1">
    <location>
        <begin position="346"/>
        <end position="384"/>
    </location>
</feature>
<feature type="transmembrane region" description="Helical" evidence="1">
    <location>
        <begin position="385"/>
        <end position="405"/>
    </location>
</feature>
<feature type="transmembrane region" description="Helical" evidence="1">
    <location>
        <begin position="406"/>
        <end position="426"/>
    </location>
</feature>
<feature type="topological domain" description="Cytoplasmic" evidence="1">
    <location>
        <begin position="427"/>
        <end position="441"/>
    </location>
</feature>
<feature type="transmembrane region" description="Helical" evidence="1">
    <location>
        <begin position="442"/>
        <end position="462"/>
    </location>
</feature>
<feature type="topological domain" description="Extracellular" evidence="1">
    <location>
        <begin position="463"/>
        <end position="476"/>
    </location>
</feature>
<feature type="sequence conflict" description="In Ref. 5; AAM62803." evidence="6" ref="5">
    <original>A</original>
    <variation>V</variation>
    <location>
        <position position="74"/>
    </location>
</feature>
<name>AAP3_ARATH</name>